<keyword id="KW-0071">Autoinducer synthesis</keyword>
<keyword id="KW-0408">Iron</keyword>
<keyword id="KW-0456">Lyase</keyword>
<keyword id="KW-0479">Metal-binding</keyword>
<keyword id="KW-0673">Quorum sensing</keyword>
<keyword id="KW-1185">Reference proteome</keyword>
<protein>
    <recommendedName>
        <fullName evidence="1">S-ribosylhomocysteine lyase</fullName>
        <ecNumber evidence="1">4.4.1.21</ecNumber>
    </recommendedName>
    <alternativeName>
        <fullName evidence="1">AI-2 synthesis protein</fullName>
    </alternativeName>
    <alternativeName>
        <fullName evidence="1">Autoinducer-2 production protein LuxS</fullName>
    </alternativeName>
</protein>
<gene>
    <name evidence="1" type="primary">luxS</name>
    <name type="ordered locus">Deide_01300</name>
</gene>
<name>LUXS_DEIDV</name>
<accession>C1CYB4</accession>
<dbReference type="EC" id="4.4.1.21" evidence="1"/>
<dbReference type="EMBL" id="CP001114">
    <property type="protein sequence ID" value="ACO44935.1"/>
    <property type="molecule type" value="Genomic_DNA"/>
</dbReference>
<dbReference type="RefSeq" id="WP_012692058.1">
    <property type="nucleotide sequence ID" value="NC_012526.1"/>
</dbReference>
<dbReference type="SMR" id="C1CYB4"/>
<dbReference type="STRING" id="546414.Deide_01300"/>
<dbReference type="PaxDb" id="546414-Deide_01300"/>
<dbReference type="KEGG" id="ddr:Deide_01300"/>
<dbReference type="eggNOG" id="COG1854">
    <property type="taxonomic scope" value="Bacteria"/>
</dbReference>
<dbReference type="HOGENOM" id="CLU_107531_2_0_0"/>
<dbReference type="OrthoDB" id="9788129at2"/>
<dbReference type="Proteomes" id="UP000002208">
    <property type="component" value="Chromosome"/>
</dbReference>
<dbReference type="GO" id="GO:0005506">
    <property type="term" value="F:iron ion binding"/>
    <property type="evidence" value="ECO:0007669"/>
    <property type="project" value="InterPro"/>
</dbReference>
<dbReference type="GO" id="GO:0043768">
    <property type="term" value="F:S-ribosylhomocysteine lyase activity"/>
    <property type="evidence" value="ECO:0007669"/>
    <property type="project" value="UniProtKB-UniRule"/>
</dbReference>
<dbReference type="GO" id="GO:0009372">
    <property type="term" value="P:quorum sensing"/>
    <property type="evidence" value="ECO:0007669"/>
    <property type="project" value="UniProtKB-UniRule"/>
</dbReference>
<dbReference type="Gene3D" id="3.30.1360.80">
    <property type="entry name" value="S-ribosylhomocysteinase (LuxS)"/>
    <property type="match status" value="1"/>
</dbReference>
<dbReference type="HAMAP" id="MF_00091">
    <property type="entry name" value="LuxS"/>
    <property type="match status" value="1"/>
</dbReference>
<dbReference type="InterPro" id="IPR037005">
    <property type="entry name" value="LuxS_sf"/>
</dbReference>
<dbReference type="InterPro" id="IPR011249">
    <property type="entry name" value="Metalloenz_LuxS/M16"/>
</dbReference>
<dbReference type="InterPro" id="IPR003815">
    <property type="entry name" value="S-ribosylhomocysteinase"/>
</dbReference>
<dbReference type="NCBIfam" id="NF002606">
    <property type="entry name" value="PRK02260.2-4"/>
    <property type="match status" value="1"/>
</dbReference>
<dbReference type="PANTHER" id="PTHR35799">
    <property type="entry name" value="S-RIBOSYLHOMOCYSTEINE LYASE"/>
    <property type="match status" value="1"/>
</dbReference>
<dbReference type="PANTHER" id="PTHR35799:SF1">
    <property type="entry name" value="S-RIBOSYLHOMOCYSTEINE LYASE"/>
    <property type="match status" value="1"/>
</dbReference>
<dbReference type="Pfam" id="PF02664">
    <property type="entry name" value="LuxS"/>
    <property type="match status" value="1"/>
</dbReference>
<dbReference type="PIRSF" id="PIRSF006160">
    <property type="entry name" value="AI2"/>
    <property type="match status" value="1"/>
</dbReference>
<dbReference type="PRINTS" id="PR01487">
    <property type="entry name" value="LUXSPROTEIN"/>
</dbReference>
<dbReference type="SUPFAM" id="SSF63411">
    <property type="entry name" value="LuxS/MPP-like metallohydrolase"/>
    <property type="match status" value="1"/>
</dbReference>
<proteinExistence type="inferred from homology"/>
<feature type="chain" id="PRO_1000202667" description="S-ribosylhomocysteine lyase">
    <location>
        <begin position="1"/>
        <end position="155"/>
    </location>
</feature>
<feature type="binding site" evidence="1">
    <location>
        <position position="54"/>
    </location>
    <ligand>
        <name>Fe cation</name>
        <dbReference type="ChEBI" id="CHEBI:24875"/>
    </ligand>
</feature>
<feature type="binding site" evidence="1">
    <location>
        <position position="58"/>
    </location>
    <ligand>
        <name>Fe cation</name>
        <dbReference type="ChEBI" id="CHEBI:24875"/>
    </ligand>
</feature>
<feature type="binding site" evidence="1">
    <location>
        <position position="122"/>
    </location>
    <ligand>
        <name>Fe cation</name>
        <dbReference type="ChEBI" id="CHEBI:24875"/>
    </ligand>
</feature>
<evidence type="ECO:0000255" key="1">
    <source>
        <dbReference type="HAMAP-Rule" id="MF_00091"/>
    </source>
</evidence>
<sequence length="155" mass="17044">MANVESFDLDHTKVRAPYVRLAGVKTTPRGDSISKYDLRLLQPNQGAIDPAAIHTLEHLLAGYLRDHLQDVVDVSPMGCRTGMYMAVIGTPDEEGVLKAFEAALQDTAAHDRPIPGVSELECGNFRDHDLHAARQHAREALAQGLKVQQTVLLQR</sequence>
<organism>
    <name type="scientific">Deinococcus deserti (strain DSM 17065 / CIP 109153 / LMG 22923 / VCD115)</name>
    <dbReference type="NCBI Taxonomy" id="546414"/>
    <lineage>
        <taxon>Bacteria</taxon>
        <taxon>Thermotogati</taxon>
        <taxon>Deinococcota</taxon>
        <taxon>Deinococci</taxon>
        <taxon>Deinococcales</taxon>
        <taxon>Deinococcaceae</taxon>
        <taxon>Deinococcus</taxon>
    </lineage>
</organism>
<reference key="1">
    <citation type="journal article" date="2009" name="PLoS Genet.">
        <title>Alliance of proteomics and genomics to unravel the specificities of Sahara bacterium Deinococcus deserti.</title>
        <authorList>
            <person name="de Groot A."/>
            <person name="Dulermo R."/>
            <person name="Ortet P."/>
            <person name="Blanchard L."/>
            <person name="Guerin P."/>
            <person name="Fernandez B."/>
            <person name="Vacherie B."/>
            <person name="Dossat C."/>
            <person name="Jolivet E."/>
            <person name="Siguier P."/>
            <person name="Chandler M."/>
            <person name="Barakat M."/>
            <person name="Dedieu A."/>
            <person name="Barbe V."/>
            <person name="Heulin T."/>
            <person name="Sommer S."/>
            <person name="Achouak W."/>
            <person name="Armengaud J."/>
        </authorList>
    </citation>
    <scope>NUCLEOTIDE SEQUENCE [LARGE SCALE GENOMIC DNA]</scope>
    <source>
        <strain>DSM 17065 / CIP 109153 / LMG 22923 / VCD115</strain>
    </source>
</reference>
<comment type="function">
    <text evidence="1">Involved in the synthesis of autoinducer 2 (AI-2) which is secreted by bacteria and is used to communicate both the cell density and the metabolic potential of the environment. The regulation of gene expression in response to changes in cell density is called quorum sensing. Catalyzes the transformation of S-ribosylhomocysteine (RHC) to homocysteine (HC) and 4,5-dihydroxy-2,3-pentadione (DPD).</text>
</comment>
<comment type="catalytic activity">
    <reaction evidence="1">
        <text>S-(5-deoxy-D-ribos-5-yl)-L-homocysteine = (S)-4,5-dihydroxypentane-2,3-dione + L-homocysteine</text>
        <dbReference type="Rhea" id="RHEA:17753"/>
        <dbReference type="ChEBI" id="CHEBI:29484"/>
        <dbReference type="ChEBI" id="CHEBI:58195"/>
        <dbReference type="ChEBI" id="CHEBI:58199"/>
        <dbReference type="EC" id="4.4.1.21"/>
    </reaction>
</comment>
<comment type="cofactor">
    <cofactor evidence="1">
        <name>Fe cation</name>
        <dbReference type="ChEBI" id="CHEBI:24875"/>
    </cofactor>
    <text evidence="1">Binds 1 Fe cation per subunit.</text>
</comment>
<comment type="subunit">
    <text evidence="1">Homodimer.</text>
</comment>
<comment type="similarity">
    <text evidence="1">Belongs to the LuxS family.</text>
</comment>